<keyword id="KW-0450">Lipoyl</keyword>
<keyword id="KW-1185">Reference proteome</keyword>
<protein>
    <recommendedName>
        <fullName evidence="1">Glycine cleavage system H protein 1</fullName>
    </recommendedName>
</protein>
<gene>
    <name evidence="1" type="primary">gcvH1</name>
    <name type="synonym">gcvH-1</name>
    <name type="ordered locus">PSPTO_1277</name>
</gene>
<name>GCSH1_PSESM</name>
<accession>Q887L4</accession>
<evidence type="ECO:0000255" key="1">
    <source>
        <dbReference type="HAMAP-Rule" id="MF_00272"/>
    </source>
</evidence>
<evidence type="ECO:0000255" key="2">
    <source>
        <dbReference type="PROSITE-ProRule" id="PRU01066"/>
    </source>
</evidence>
<sequence length="127" mass="13862">MSELRFTADHEWLRAEADGSVTVGITPYAQESLGDVVFVQLPELQAYAQHAEVSVVESVKAASSINMPLDGEVVEVNAVLDATPERVNEDALGAGWFFRFIPQDAYAIHGLLDQDAYDRLIKANAQA</sequence>
<dbReference type="EMBL" id="AE016853">
    <property type="protein sequence ID" value="AAO54802.1"/>
    <property type="molecule type" value="Genomic_DNA"/>
</dbReference>
<dbReference type="RefSeq" id="NP_791107.1">
    <property type="nucleotide sequence ID" value="NC_004578.1"/>
</dbReference>
<dbReference type="RefSeq" id="WP_011103496.1">
    <property type="nucleotide sequence ID" value="NC_004578.1"/>
</dbReference>
<dbReference type="SMR" id="Q887L4"/>
<dbReference type="STRING" id="223283.PSPTO_1277"/>
<dbReference type="GeneID" id="1182913"/>
<dbReference type="KEGG" id="pst:PSPTO_1277"/>
<dbReference type="PATRIC" id="fig|223283.9.peg.1299"/>
<dbReference type="eggNOG" id="COG0509">
    <property type="taxonomic scope" value="Bacteria"/>
</dbReference>
<dbReference type="HOGENOM" id="CLU_097408_2_0_6"/>
<dbReference type="OrthoDB" id="9796712at2"/>
<dbReference type="PhylomeDB" id="Q887L4"/>
<dbReference type="Proteomes" id="UP000002515">
    <property type="component" value="Chromosome"/>
</dbReference>
<dbReference type="GO" id="GO:0005829">
    <property type="term" value="C:cytosol"/>
    <property type="evidence" value="ECO:0007669"/>
    <property type="project" value="TreeGrafter"/>
</dbReference>
<dbReference type="GO" id="GO:0005960">
    <property type="term" value="C:glycine cleavage complex"/>
    <property type="evidence" value="ECO:0007669"/>
    <property type="project" value="InterPro"/>
</dbReference>
<dbReference type="GO" id="GO:0019464">
    <property type="term" value="P:glycine decarboxylation via glycine cleavage system"/>
    <property type="evidence" value="ECO:0007669"/>
    <property type="project" value="UniProtKB-UniRule"/>
</dbReference>
<dbReference type="CDD" id="cd06848">
    <property type="entry name" value="GCS_H"/>
    <property type="match status" value="1"/>
</dbReference>
<dbReference type="Gene3D" id="2.40.50.100">
    <property type="match status" value="1"/>
</dbReference>
<dbReference type="HAMAP" id="MF_00272">
    <property type="entry name" value="GcvH"/>
    <property type="match status" value="1"/>
</dbReference>
<dbReference type="InterPro" id="IPR000089">
    <property type="entry name" value="Biotin_lipoyl"/>
</dbReference>
<dbReference type="InterPro" id="IPR002930">
    <property type="entry name" value="GCV_H"/>
</dbReference>
<dbReference type="InterPro" id="IPR033753">
    <property type="entry name" value="GCV_H/Fam206"/>
</dbReference>
<dbReference type="InterPro" id="IPR017453">
    <property type="entry name" value="GCV_H_sub"/>
</dbReference>
<dbReference type="InterPro" id="IPR011053">
    <property type="entry name" value="Single_hybrid_motif"/>
</dbReference>
<dbReference type="NCBIfam" id="TIGR00527">
    <property type="entry name" value="gcvH"/>
    <property type="match status" value="1"/>
</dbReference>
<dbReference type="NCBIfam" id="NF002270">
    <property type="entry name" value="PRK01202.1"/>
    <property type="match status" value="1"/>
</dbReference>
<dbReference type="PANTHER" id="PTHR11715">
    <property type="entry name" value="GLYCINE CLEAVAGE SYSTEM H PROTEIN"/>
    <property type="match status" value="1"/>
</dbReference>
<dbReference type="PANTHER" id="PTHR11715:SF3">
    <property type="entry name" value="GLYCINE CLEAVAGE SYSTEM H PROTEIN-RELATED"/>
    <property type="match status" value="1"/>
</dbReference>
<dbReference type="Pfam" id="PF01597">
    <property type="entry name" value="GCV_H"/>
    <property type="match status" value="1"/>
</dbReference>
<dbReference type="SUPFAM" id="SSF51230">
    <property type="entry name" value="Single hybrid motif"/>
    <property type="match status" value="1"/>
</dbReference>
<dbReference type="PROSITE" id="PS50968">
    <property type="entry name" value="BIOTINYL_LIPOYL"/>
    <property type="match status" value="1"/>
</dbReference>
<comment type="function">
    <text evidence="1">The glycine cleavage system catalyzes the degradation of glycine. The H protein shuttles the methylamine group of glycine from the P protein to the T protein.</text>
</comment>
<comment type="cofactor">
    <cofactor evidence="1">
        <name>(R)-lipoate</name>
        <dbReference type="ChEBI" id="CHEBI:83088"/>
    </cofactor>
    <text evidence="1">Binds 1 lipoyl cofactor covalently.</text>
</comment>
<comment type="subunit">
    <text evidence="1">The glycine cleavage system is composed of four proteins: P, T, L and H.</text>
</comment>
<comment type="similarity">
    <text evidence="1">Belongs to the GcvH family.</text>
</comment>
<reference key="1">
    <citation type="journal article" date="2003" name="Proc. Natl. Acad. Sci. U.S.A.">
        <title>The complete genome sequence of the Arabidopsis and tomato pathogen Pseudomonas syringae pv. tomato DC3000.</title>
        <authorList>
            <person name="Buell C.R."/>
            <person name="Joardar V."/>
            <person name="Lindeberg M."/>
            <person name="Selengut J."/>
            <person name="Paulsen I.T."/>
            <person name="Gwinn M.L."/>
            <person name="Dodson R.J."/>
            <person name="DeBoy R.T."/>
            <person name="Durkin A.S."/>
            <person name="Kolonay J.F."/>
            <person name="Madupu R."/>
            <person name="Daugherty S.C."/>
            <person name="Brinkac L.M."/>
            <person name="Beanan M.J."/>
            <person name="Haft D.H."/>
            <person name="Nelson W.C."/>
            <person name="Davidsen T.M."/>
            <person name="Zafar N."/>
            <person name="Zhou L."/>
            <person name="Liu J."/>
            <person name="Yuan Q."/>
            <person name="Khouri H.M."/>
            <person name="Fedorova N.B."/>
            <person name="Tran B."/>
            <person name="Russell D."/>
            <person name="Berry K.J."/>
            <person name="Utterback T.R."/>
            <person name="Van Aken S.E."/>
            <person name="Feldblyum T.V."/>
            <person name="D'Ascenzo M."/>
            <person name="Deng W.-L."/>
            <person name="Ramos A.R."/>
            <person name="Alfano J.R."/>
            <person name="Cartinhour S."/>
            <person name="Chatterjee A.K."/>
            <person name="Delaney T.P."/>
            <person name="Lazarowitz S.G."/>
            <person name="Martin G.B."/>
            <person name="Schneider D.J."/>
            <person name="Tang X."/>
            <person name="Bender C.L."/>
            <person name="White O."/>
            <person name="Fraser C.M."/>
            <person name="Collmer A."/>
        </authorList>
    </citation>
    <scope>NUCLEOTIDE SEQUENCE [LARGE SCALE GENOMIC DNA]</scope>
    <source>
        <strain>ATCC BAA-871 / DC3000</strain>
    </source>
</reference>
<proteinExistence type="inferred from homology"/>
<feature type="chain" id="PRO_0000166237" description="Glycine cleavage system H protein 1">
    <location>
        <begin position="1"/>
        <end position="127"/>
    </location>
</feature>
<feature type="domain" description="Lipoyl-binding" evidence="2">
    <location>
        <begin position="20"/>
        <end position="101"/>
    </location>
</feature>
<feature type="modified residue" description="N6-lipoyllysine" evidence="1">
    <location>
        <position position="60"/>
    </location>
</feature>
<organism>
    <name type="scientific">Pseudomonas syringae pv. tomato (strain ATCC BAA-871 / DC3000)</name>
    <dbReference type="NCBI Taxonomy" id="223283"/>
    <lineage>
        <taxon>Bacteria</taxon>
        <taxon>Pseudomonadati</taxon>
        <taxon>Pseudomonadota</taxon>
        <taxon>Gammaproteobacteria</taxon>
        <taxon>Pseudomonadales</taxon>
        <taxon>Pseudomonadaceae</taxon>
        <taxon>Pseudomonas</taxon>
    </lineage>
</organism>